<keyword id="KW-0028">Amino-acid biosynthesis</keyword>
<keyword id="KW-0055">Arginine biosynthesis</keyword>
<keyword id="KW-0067">ATP-binding</keyword>
<keyword id="KW-0963">Cytoplasm</keyword>
<keyword id="KW-0418">Kinase</keyword>
<keyword id="KW-0547">Nucleotide-binding</keyword>
<keyword id="KW-0808">Transferase</keyword>
<gene>
    <name evidence="1" type="primary">argB</name>
    <name type="ordered locus">DET1257</name>
</gene>
<comment type="function">
    <text evidence="1">Catalyzes the ATP-dependent phosphorylation of N-acetyl-L-glutamate.</text>
</comment>
<comment type="catalytic activity">
    <reaction evidence="1">
        <text>N-acetyl-L-glutamate + ATP = N-acetyl-L-glutamyl 5-phosphate + ADP</text>
        <dbReference type="Rhea" id="RHEA:14629"/>
        <dbReference type="ChEBI" id="CHEBI:30616"/>
        <dbReference type="ChEBI" id="CHEBI:44337"/>
        <dbReference type="ChEBI" id="CHEBI:57936"/>
        <dbReference type="ChEBI" id="CHEBI:456216"/>
        <dbReference type="EC" id="2.7.2.8"/>
    </reaction>
</comment>
<comment type="pathway">
    <text evidence="1">Amino-acid biosynthesis; L-arginine biosynthesis; N(2)-acetyl-L-ornithine from L-glutamate: step 2/4.</text>
</comment>
<comment type="subcellular location">
    <subcellularLocation>
        <location evidence="1">Cytoplasm</location>
    </subcellularLocation>
</comment>
<comment type="similarity">
    <text evidence="1">Belongs to the acetylglutamate kinase family. ArgB subfamily.</text>
</comment>
<protein>
    <recommendedName>
        <fullName evidence="1">Acetylglutamate kinase</fullName>
        <ecNumber evidence="1">2.7.2.8</ecNumber>
    </recommendedName>
    <alternativeName>
        <fullName evidence="1">N-acetyl-L-glutamate 5-phosphotransferase</fullName>
    </alternativeName>
    <alternativeName>
        <fullName evidence="1">NAG kinase</fullName>
        <shortName evidence="1">NAGK</shortName>
    </alternativeName>
</protein>
<dbReference type="EC" id="2.7.2.8" evidence="1"/>
<dbReference type="EMBL" id="CP000027">
    <property type="protein sequence ID" value="AAW39482.1"/>
    <property type="molecule type" value="Genomic_DNA"/>
</dbReference>
<dbReference type="RefSeq" id="WP_010936946.1">
    <property type="nucleotide sequence ID" value="NC_002936.3"/>
</dbReference>
<dbReference type="SMR" id="Q3Z730"/>
<dbReference type="FunCoup" id="Q3Z730">
    <property type="interactions" value="346"/>
</dbReference>
<dbReference type="STRING" id="243164.DET1257"/>
<dbReference type="GeneID" id="3229442"/>
<dbReference type="KEGG" id="det:DET1257"/>
<dbReference type="eggNOG" id="COG0548">
    <property type="taxonomic scope" value="Bacteria"/>
</dbReference>
<dbReference type="HOGENOM" id="CLU_053680_1_0_0"/>
<dbReference type="InParanoid" id="Q3Z730"/>
<dbReference type="UniPathway" id="UPA00068">
    <property type="reaction ID" value="UER00107"/>
</dbReference>
<dbReference type="Proteomes" id="UP000008289">
    <property type="component" value="Chromosome"/>
</dbReference>
<dbReference type="GO" id="GO:0005737">
    <property type="term" value="C:cytoplasm"/>
    <property type="evidence" value="ECO:0007669"/>
    <property type="project" value="UniProtKB-SubCell"/>
</dbReference>
<dbReference type="GO" id="GO:0003991">
    <property type="term" value="F:acetylglutamate kinase activity"/>
    <property type="evidence" value="ECO:0007669"/>
    <property type="project" value="UniProtKB-UniRule"/>
</dbReference>
<dbReference type="GO" id="GO:0005524">
    <property type="term" value="F:ATP binding"/>
    <property type="evidence" value="ECO:0007669"/>
    <property type="project" value="UniProtKB-UniRule"/>
</dbReference>
<dbReference type="GO" id="GO:0042450">
    <property type="term" value="P:arginine biosynthetic process via ornithine"/>
    <property type="evidence" value="ECO:0007669"/>
    <property type="project" value="UniProtKB-UniRule"/>
</dbReference>
<dbReference type="GO" id="GO:0006526">
    <property type="term" value="P:L-arginine biosynthetic process"/>
    <property type="evidence" value="ECO:0007669"/>
    <property type="project" value="UniProtKB-UniPathway"/>
</dbReference>
<dbReference type="CDD" id="cd04238">
    <property type="entry name" value="AAK_NAGK-like"/>
    <property type="match status" value="1"/>
</dbReference>
<dbReference type="Gene3D" id="3.40.1160.10">
    <property type="entry name" value="Acetylglutamate kinase-like"/>
    <property type="match status" value="1"/>
</dbReference>
<dbReference type="HAMAP" id="MF_00082">
    <property type="entry name" value="ArgB"/>
    <property type="match status" value="1"/>
</dbReference>
<dbReference type="InterPro" id="IPR036393">
    <property type="entry name" value="AceGlu_kinase-like_sf"/>
</dbReference>
<dbReference type="InterPro" id="IPR004662">
    <property type="entry name" value="AcgluKinase_fam"/>
</dbReference>
<dbReference type="InterPro" id="IPR037528">
    <property type="entry name" value="ArgB"/>
</dbReference>
<dbReference type="InterPro" id="IPR001048">
    <property type="entry name" value="Asp/Glu/Uridylate_kinase"/>
</dbReference>
<dbReference type="InterPro" id="IPR001057">
    <property type="entry name" value="Glu/AcGlu_kinase"/>
</dbReference>
<dbReference type="NCBIfam" id="TIGR00761">
    <property type="entry name" value="argB"/>
    <property type="match status" value="1"/>
</dbReference>
<dbReference type="PANTHER" id="PTHR23342">
    <property type="entry name" value="N-ACETYLGLUTAMATE SYNTHASE"/>
    <property type="match status" value="1"/>
</dbReference>
<dbReference type="PANTHER" id="PTHR23342:SF0">
    <property type="entry name" value="N-ACETYLGLUTAMATE SYNTHASE, MITOCHONDRIAL"/>
    <property type="match status" value="1"/>
</dbReference>
<dbReference type="Pfam" id="PF00696">
    <property type="entry name" value="AA_kinase"/>
    <property type="match status" value="1"/>
</dbReference>
<dbReference type="PIRSF" id="PIRSF000728">
    <property type="entry name" value="NAGK"/>
    <property type="match status" value="1"/>
</dbReference>
<dbReference type="PRINTS" id="PR00474">
    <property type="entry name" value="GLU5KINASE"/>
</dbReference>
<dbReference type="SUPFAM" id="SSF53633">
    <property type="entry name" value="Carbamate kinase-like"/>
    <property type="match status" value="1"/>
</dbReference>
<feature type="chain" id="PRO_0000335624" description="Acetylglutamate kinase">
    <location>
        <begin position="1"/>
        <end position="272"/>
    </location>
</feature>
<feature type="binding site" evidence="1">
    <location>
        <begin position="46"/>
        <end position="47"/>
    </location>
    <ligand>
        <name>substrate</name>
    </ligand>
</feature>
<feature type="binding site" evidence="1">
    <location>
        <position position="68"/>
    </location>
    <ligand>
        <name>substrate</name>
    </ligand>
</feature>
<feature type="binding site" evidence="1">
    <location>
        <position position="166"/>
    </location>
    <ligand>
        <name>substrate</name>
    </ligand>
</feature>
<feature type="site" description="Transition state stabilizer" evidence="1">
    <location>
        <position position="14"/>
    </location>
</feature>
<feature type="site" description="Transition state stabilizer" evidence="1">
    <location>
        <position position="226"/>
    </location>
</feature>
<sequence>MNVSQVSNHIVVIKLGGSVLSSKDTSLKDIAALKQLGLKPVLIHGGASTVSDWSAKLGLETRLVNGERVTDDPTLDVVAAVLTGLVNKEIVAALLDMGVQAAGISGVDGATITGQMRATETGYLGDVTAVNTGLINALLDKDITPVISPVSFHHTKRPSGSRRLININGDPAAGEIAAALQAERLVFMTDVPAVKGKNGEALGEISAEHAAELLSSGTASGGMIPKLRSCLKATLAGASACIIDGRIPHMLVRELTEGNCGTTIIGQHLRRS</sequence>
<accession>Q3Z730</accession>
<name>ARGB_DEHM1</name>
<proteinExistence type="inferred from homology"/>
<organism>
    <name type="scientific">Dehalococcoides mccartyi (strain ATCC BAA-2266 / KCTC 15142 / 195)</name>
    <name type="common">Dehalococcoides ethenogenes (strain 195)</name>
    <dbReference type="NCBI Taxonomy" id="243164"/>
    <lineage>
        <taxon>Bacteria</taxon>
        <taxon>Bacillati</taxon>
        <taxon>Chloroflexota</taxon>
        <taxon>Dehalococcoidia</taxon>
        <taxon>Dehalococcoidales</taxon>
        <taxon>Dehalococcoidaceae</taxon>
        <taxon>Dehalococcoides</taxon>
    </lineage>
</organism>
<reference key="1">
    <citation type="journal article" date="2005" name="Science">
        <title>Genome sequence of the PCE-dechlorinating bacterium Dehalococcoides ethenogenes.</title>
        <authorList>
            <person name="Seshadri R."/>
            <person name="Adrian L."/>
            <person name="Fouts D.E."/>
            <person name="Eisen J.A."/>
            <person name="Phillippy A.M."/>
            <person name="Methe B.A."/>
            <person name="Ward N.L."/>
            <person name="Nelson W.C."/>
            <person name="DeBoy R.T."/>
            <person name="Khouri H.M."/>
            <person name="Kolonay J.F."/>
            <person name="Dodson R.J."/>
            <person name="Daugherty S.C."/>
            <person name="Brinkac L.M."/>
            <person name="Sullivan S.A."/>
            <person name="Madupu R."/>
            <person name="Nelson K.E."/>
            <person name="Kang K.H."/>
            <person name="Impraim M."/>
            <person name="Tran K."/>
            <person name="Robinson J.M."/>
            <person name="Forberger H.A."/>
            <person name="Fraser C.M."/>
            <person name="Zinder S.H."/>
            <person name="Heidelberg J.F."/>
        </authorList>
    </citation>
    <scope>NUCLEOTIDE SEQUENCE [LARGE SCALE GENOMIC DNA]</scope>
    <source>
        <strain>ATCC BAA-2266 / KCTC 15142 / 195</strain>
    </source>
</reference>
<evidence type="ECO:0000255" key="1">
    <source>
        <dbReference type="HAMAP-Rule" id="MF_00082"/>
    </source>
</evidence>